<gene>
    <name type="ordered locus">CTA_0378</name>
</gene>
<accession>Q3KM09</accession>
<sequence>MEARLVLGSSSERRKAVLESFRIPFICVSPDFDERSIVYSGDPFEYTKELAWNKANVVRSQGFSDALIITADTVVVYKGEVFNKPESEEHAVEMLRTLSGSSHSVITTLVLMQNEKVLSASENTQVSFIDIPPQHLKTYVRSFSSLKRCGGYCVQDGGGLIIKQIEGCVYNIQGLPIKTLNQLLMEFNISLWDYLV</sequence>
<feature type="chain" id="PRO_0000267279" description="dTTP/UTP pyrophosphatase">
    <location>
        <begin position="1"/>
        <end position="196"/>
    </location>
</feature>
<feature type="active site" description="Proton acceptor" evidence="1">
    <location>
        <position position="72"/>
    </location>
</feature>
<feature type="site" description="Important for substrate specificity" evidence="1">
    <location>
        <position position="13"/>
    </location>
</feature>
<feature type="site" description="Important for substrate specificity" evidence="1">
    <location>
        <position position="73"/>
    </location>
</feature>
<feature type="site" description="Important for substrate specificity" evidence="1">
    <location>
        <position position="155"/>
    </location>
</feature>
<dbReference type="EC" id="3.6.1.9" evidence="1"/>
<dbReference type="EMBL" id="CP000051">
    <property type="protein sequence ID" value="AAX50613.1"/>
    <property type="molecule type" value="Genomic_DNA"/>
</dbReference>
<dbReference type="RefSeq" id="WP_009871700.1">
    <property type="nucleotide sequence ID" value="NC_007429.1"/>
</dbReference>
<dbReference type="SMR" id="Q3KM09"/>
<dbReference type="KEGG" id="cta:CTA_0378"/>
<dbReference type="HOGENOM" id="CLU_040416_0_0_0"/>
<dbReference type="Proteomes" id="UP000002532">
    <property type="component" value="Chromosome"/>
</dbReference>
<dbReference type="GO" id="GO:0005737">
    <property type="term" value="C:cytoplasm"/>
    <property type="evidence" value="ECO:0007669"/>
    <property type="project" value="UniProtKB-SubCell"/>
</dbReference>
<dbReference type="GO" id="GO:0036218">
    <property type="term" value="F:dTTP diphosphatase activity"/>
    <property type="evidence" value="ECO:0007669"/>
    <property type="project" value="RHEA"/>
</dbReference>
<dbReference type="GO" id="GO:0036221">
    <property type="term" value="F:UTP diphosphatase activity"/>
    <property type="evidence" value="ECO:0007669"/>
    <property type="project" value="RHEA"/>
</dbReference>
<dbReference type="GO" id="GO:0009117">
    <property type="term" value="P:nucleotide metabolic process"/>
    <property type="evidence" value="ECO:0007669"/>
    <property type="project" value="UniProtKB-KW"/>
</dbReference>
<dbReference type="CDD" id="cd00555">
    <property type="entry name" value="Maf"/>
    <property type="match status" value="1"/>
</dbReference>
<dbReference type="FunFam" id="3.90.950.10:FF:000018">
    <property type="entry name" value="dTTP/UTP pyrophosphatase"/>
    <property type="match status" value="1"/>
</dbReference>
<dbReference type="Gene3D" id="3.90.950.10">
    <property type="match status" value="1"/>
</dbReference>
<dbReference type="HAMAP" id="MF_00528">
    <property type="entry name" value="Maf"/>
    <property type="match status" value="1"/>
</dbReference>
<dbReference type="InterPro" id="IPR029001">
    <property type="entry name" value="ITPase-like_fam"/>
</dbReference>
<dbReference type="InterPro" id="IPR003697">
    <property type="entry name" value="Maf-like"/>
</dbReference>
<dbReference type="NCBIfam" id="TIGR00172">
    <property type="entry name" value="maf"/>
    <property type="match status" value="1"/>
</dbReference>
<dbReference type="PANTHER" id="PTHR43213">
    <property type="entry name" value="BIFUNCTIONAL DTTP/UTP PYROPHOSPHATASE/METHYLTRANSFERASE PROTEIN-RELATED"/>
    <property type="match status" value="1"/>
</dbReference>
<dbReference type="PANTHER" id="PTHR43213:SF5">
    <property type="entry name" value="BIFUNCTIONAL DTTP_UTP PYROPHOSPHATASE_METHYLTRANSFERASE PROTEIN-RELATED"/>
    <property type="match status" value="1"/>
</dbReference>
<dbReference type="Pfam" id="PF02545">
    <property type="entry name" value="Maf"/>
    <property type="match status" value="1"/>
</dbReference>
<dbReference type="PIRSF" id="PIRSF006305">
    <property type="entry name" value="Maf"/>
    <property type="match status" value="1"/>
</dbReference>
<dbReference type="SUPFAM" id="SSF52972">
    <property type="entry name" value="ITPase-like"/>
    <property type="match status" value="1"/>
</dbReference>
<name>NTPPA_CHLTA</name>
<protein>
    <recommendedName>
        <fullName evidence="1">dTTP/UTP pyrophosphatase</fullName>
        <shortName evidence="1">dTTPase/UTPase</shortName>
        <ecNumber evidence="1">3.6.1.9</ecNumber>
    </recommendedName>
    <alternativeName>
        <fullName evidence="1">Nucleoside triphosphate pyrophosphatase</fullName>
    </alternativeName>
    <alternativeName>
        <fullName evidence="1">Nucleotide pyrophosphatase</fullName>
        <shortName evidence="1">Nucleotide PPase</shortName>
    </alternativeName>
</protein>
<evidence type="ECO:0000255" key="1">
    <source>
        <dbReference type="HAMAP-Rule" id="MF_00528"/>
    </source>
</evidence>
<comment type="function">
    <text evidence="1">Nucleoside triphosphate pyrophosphatase that hydrolyzes dTTP and UTP. May have a dual role in cell division arrest and in preventing the incorporation of modified nucleotides into cellular nucleic acids.</text>
</comment>
<comment type="catalytic activity">
    <reaction evidence="1">
        <text>dTTP + H2O = dTMP + diphosphate + H(+)</text>
        <dbReference type="Rhea" id="RHEA:28534"/>
        <dbReference type="ChEBI" id="CHEBI:15377"/>
        <dbReference type="ChEBI" id="CHEBI:15378"/>
        <dbReference type="ChEBI" id="CHEBI:33019"/>
        <dbReference type="ChEBI" id="CHEBI:37568"/>
        <dbReference type="ChEBI" id="CHEBI:63528"/>
        <dbReference type="EC" id="3.6.1.9"/>
    </reaction>
</comment>
<comment type="catalytic activity">
    <reaction evidence="1">
        <text>UTP + H2O = UMP + diphosphate + H(+)</text>
        <dbReference type="Rhea" id="RHEA:29395"/>
        <dbReference type="ChEBI" id="CHEBI:15377"/>
        <dbReference type="ChEBI" id="CHEBI:15378"/>
        <dbReference type="ChEBI" id="CHEBI:33019"/>
        <dbReference type="ChEBI" id="CHEBI:46398"/>
        <dbReference type="ChEBI" id="CHEBI:57865"/>
        <dbReference type="EC" id="3.6.1.9"/>
    </reaction>
</comment>
<comment type="cofactor">
    <cofactor evidence="1">
        <name>a divalent metal cation</name>
        <dbReference type="ChEBI" id="CHEBI:60240"/>
    </cofactor>
</comment>
<comment type="subcellular location">
    <subcellularLocation>
        <location evidence="1">Cytoplasm</location>
    </subcellularLocation>
</comment>
<comment type="similarity">
    <text evidence="1">Belongs to the Maf family. YhdE subfamily.</text>
</comment>
<proteinExistence type="inferred from homology"/>
<organism>
    <name type="scientific">Chlamydia trachomatis serovar A (strain ATCC VR-571B / DSM 19440 / HAR-13)</name>
    <dbReference type="NCBI Taxonomy" id="315277"/>
    <lineage>
        <taxon>Bacteria</taxon>
        <taxon>Pseudomonadati</taxon>
        <taxon>Chlamydiota</taxon>
        <taxon>Chlamydiia</taxon>
        <taxon>Chlamydiales</taxon>
        <taxon>Chlamydiaceae</taxon>
        <taxon>Chlamydia/Chlamydophila group</taxon>
        <taxon>Chlamydia</taxon>
    </lineage>
</organism>
<keyword id="KW-0963">Cytoplasm</keyword>
<keyword id="KW-0378">Hydrolase</keyword>
<keyword id="KW-0546">Nucleotide metabolism</keyword>
<reference key="1">
    <citation type="journal article" date="2005" name="Infect. Immun.">
        <title>Comparative genomic analysis of Chlamydia trachomatis oculotropic and genitotropic strains.</title>
        <authorList>
            <person name="Carlson J.H."/>
            <person name="Porcella S.F."/>
            <person name="McClarty G."/>
            <person name="Caldwell H.D."/>
        </authorList>
    </citation>
    <scope>NUCLEOTIDE SEQUENCE [LARGE SCALE GENOMIC DNA]</scope>
    <source>
        <strain>ATCC VR-571B / DSM 19440 / HAR-13</strain>
    </source>
</reference>